<sequence length="24" mass="2678">FLPLLAGLAANFLPKIFCKITRKC</sequence>
<feature type="peptide" id="PRO_0000233920" description="Brevinin-1E" evidence="4">
    <location>
        <begin position="1"/>
        <end position="24"/>
    </location>
</feature>
<feature type="disulfide bond" evidence="2">
    <location>
        <begin position="18"/>
        <end position="24"/>
    </location>
</feature>
<reference evidence="5" key="1">
    <citation type="journal article" date="2006" name="J. Endocrinol.">
        <title>Skin secretions of Rana saharica frogs reveal antimicrobial peptides esculentins-1 and -1B and brevinins-1E and -2EC with novel insulin releasing activity.</title>
        <authorList>
            <person name="Marenah L."/>
            <person name="Flatt P.R."/>
            <person name="Orr D.F."/>
            <person name="Shaw C."/>
            <person name="Abdel-Wahab Y.H.A."/>
        </authorList>
    </citation>
    <scope>PROTEIN SEQUENCE</scope>
    <scope>FUNCTION</scope>
    <scope>SUBCELLULAR LOCATION</scope>
    <scope>TISSUE SPECIFICITY</scope>
    <scope>MASS SPECTROMETRY</scope>
    <source>
        <tissue evidence="4">Skin secretion</tissue>
    </source>
</reference>
<keyword id="KW-0878">Amphibian defense peptide</keyword>
<keyword id="KW-0044">Antibiotic</keyword>
<keyword id="KW-0929">Antimicrobial</keyword>
<keyword id="KW-0903">Direct protein sequencing</keyword>
<keyword id="KW-1015">Disulfide bond</keyword>
<keyword id="KW-0964">Secreted</keyword>
<evidence type="ECO:0000250" key="1"/>
<evidence type="ECO:0000250" key="2">
    <source>
        <dbReference type="UniProtKB" id="P32412"/>
    </source>
</evidence>
<evidence type="ECO:0000255" key="3"/>
<evidence type="ECO:0000269" key="4">
    <source>
    </source>
</evidence>
<evidence type="ECO:0000305" key="5"/>
<dbReference type="GO" id="GO:0005576">
    <property type="term" value="C:extracellular region"/>
    <property type="evidence" value="ECO:0000314"/>
    <property type="project" value="UniProtKB"/>
</dbReference>
<dbReference type="GO" id="GO:0042742">
    <property type="term" value="P:defense response to bacterium"/>
    <property type="evidence" value="ECO:0007669"/>
    <property type="project" value="UniProtKB-KW"/>
</dbReference>
<dbReference type="InterPro" id="IPR012520">
    <property type="entry name" value="Antimicrobial_frog_1"/>
</dbReference>
<dbReference type="Pfam" id="PF08018">
    <property type="entry name" value="Antimicrobial_1"/>
    <property type="match status" value="1"/>
</dbReference>
<organism>
    <name type="scientific">Pelophylax saharicus</name>
    <name type="common">Sahara frog</name>
    <name type="synonym">Rana saharica</name>
    <dbReference type="NCBI Taxonomy" id="70019"/>
    <lineage>
        <taxon>Eukaryota</taxon>
        <taxon>Metazoa</taxon>
        <taxon>Chordata</taxon>
        <taxon>Craniata</taxon>
        <taxon>Vertebrata</taxon>
        <taxon>Euteleostomi</taxon>
        <taxon>Amphibia</taxon>
        <taxon>Batrachia</taxon>
        <taxon>Anura</taxon>
        <taxon>Neobatrachia</taxon>
        <taxon>Ranoidea</taxon>
        <taxon>Ranidae</taxon>
        <taxon>Pelophylax</taxon>
    </lineage>
</organism>
<protein>
    <recommendedName>
        <fullName>Brevinin-1E</fullName>
    </recommendedName>
</protein>
<comment type="function">
    <text evidence="1 4">Antimicrobial peptide (By similarity). Stimulates insulin release by BRIN-BD11 cells in vitro.</text>
</comment>
<comment type="subcellular location">
    <subcellularLocation>
        <location evidence="4">Secreted</location>
    </subcellularLocation>
</comment>
<comment type="tissue specificity">
    <text evidence="4">Expressed by the skin glands.</text>
</comment>
<comment type="mass spectrometry" mass="2676.9" method="MALDI" evidence="4"/>
<comment type="similarity">
    <text evidence="3">Belongs to the frog skin active peptide (FSAP) family. Brevinin subfamily.</text>
</comment>
<proteinExistence type="evidence at protein level"/>
<name>BR1E_PELSA</name>
<accession>P84839</accession>